<sequence>MGRFRGSITKLSRREGINLAETEKVQKYLDKRPYAPGQHGQRRGRGRPSDYSVRLREKQKLARLYGMGEKQFRNLFEEAASVPGVTGTVFLQLLERRLDNVVFRMGFASTRRQARQFVGHGHILVNGKKVDIPSYRVKIGDEISVFEGSRQMGFVQENMEAQKRRRVSPWVELDVENFKGTFSRLPAREDLALPINENFIIEYYSR</sequence>
<name>RS4_DEIDV</name>
<keyword id="KW-1185">Reference proteome</keyword>
<keyword id="KW-0687">Ribonucleoprotein</keyword>
<keyword id="KW-0689">Ribosomal protein</keyword>
<keyword id="KW-0694">RNA-binding</keyword>
<keyword id="KW-0699">rRNA-binding</keyword>
<protein>
    <recommendedName>
        <fullName evidence="1">Small ribosomal subunit protein uS4</fullName>
    </recommendedName>
    <alternativeName>
        <fullName evidence="3">30S ribosomal protein S4</fullName>
    </alternativeName>
</protein>
<evidence type="ECO:0000255" key="1">
    <source>
        <dbReference type="HAMAP-Rule" id="MF_01306"/>
    </source>
</evidence>
<evidence type="ECO:0000256" key="2">
    <source>
        <dbReference type="SAM" id="MobiDB-lite"/>
    </source>
</evidence>
<evidence type="ECO:0000305" key="3"/>
<dbReference type="EMBL" id="CP001114">
    <property type="protein sequence ID" value="ACO46852.1"/>
    <property type="molecule type" value="Genomic_DNA"/>
</dbReference>
<dbReference type="RefSeq" id="WP_012693974.1">
    <property type="nucleotide sequence ID" value="NC_012526.1"/>
</dbReference>
<dbReference type="SMR" id="C1CXD5"/>
<dbReference type="STRING" id="546414.Deide_18640"/>
<dbReference type="PaxDb" id="546414-Deide_18640"/>
<dbReference type="KEGG" id="ddr:Deide_18640"/>
<dbReference type="eggNOG" id="COG0522">
    <property type="taxonomic scope" value="Bacteria"/>
</dbReference>
<dbReference type="HOGENOM" id="CLU_092403_0_1_0"/>
<dbReference type="OrthoDB" id="9803672at2"/>
<dbReference type="Proteomes" id="UP000002208">
    <property type="component" value="Chromosome"/>
</dbReference>
<dbReference type="GO" id="GO:0015935">
    <property type="term" value="C:small ribosomal subunit"/>
    <property type="evidence" value="ECO:0007669"/>
    <property type="project" value="InterPro"/>
</dbReference>
<dbReference type="GO" id="GO:0019843">
    <property type="term" value="F:rRNA binding"/>
    <property type="evidence" value="ECO:0007669"/>
    <property type="project" value="UniProtKB-UniRule"/>
</dbReference>
<dbReference type="GO" id="GO:0003735">
    <property type="term" value="F:structural constituent of ribosome"/>
    <property type="evidence" value="ECO:0007669"/>
    <property type="project" value="InterPro"/>
</dbReference>
<dbReference type="GO" id="GO:0042274">
    <property type="term" value="P:ribosomal small subunit biogenesis"/>
    <property type="evidence" value="ECO:0007669"/>
    <property type="project" value="TreeGrafter"/>
</dbReference>
<dbReference type="GO" id="GO:0006412">
    <property type="term" value="P:translation"/>
    <property type="evidence" value="ECO:0007669"/>
    <property type="project" value="UniProtKB-UniRule"/>
</dbReference>
<dbReference type="CDD" id="cd00165">
    <property type="entry name" value="S4"/>
    <property type="match status" value="1"/>
</dbReference>
<dbReference type="FunFam" id="3.10.290.10:FF:000001">
    <property type="entry name" value="30S ribosomal protein S4"/>
    <property type="match status" value="1"/>
</dbReference>
<dbReference type="Gene3D" id="1.10.1050.10">
    <property type="entry name" value="Ribosomal Protein S4 Delta 41, Chain A, domain 1"/>
    <property type="match status" value="1"/>
</dbReference>
<dbReference type="Gene3D" id="3.10.290.10">
    <property type="entry name" value="RNA-binding S4 domain"/>
    <property type="match status" value="1"/>
</dbReference>
<dbReference type="HAMAP" id="MF_01306_B">
    <property type="entry name" value="Ribosomal_uS4_B"/>
    <property type="match status" value="1"/>
</dbReference>
<dbReference type="InterPro" id="IPR022801">
    <property type="entry name" value="Ribosomal_uS4"/>
</dbReference>
<dbReference type="InterPro" id="IPR005709">
    <property type="entry name" value="Ribosomal_uS4_bac-type"/>
</dbReference>
<dbReference type="InterPro" id="IPR018079">
    <property type="entry name" value="Ribosomal_uS4_CS"/>
</dbReference>
<dbReference type="InterPro" id="IPR001912">
    <property type="entry name" value="Ribosomal_uS4_N"/>
</dbReference>
<dbReference type="InterPro" id="IPR002942">
    <property type="entry name" value="S4_RNA-bd"/>
</dbReference>
<dbReference type="InterPro" id="IPR036986">
    <property type="entry name" value="S4_RNA-bd_sf"/>
</dbReference>
<dbReference type="NCBIfam" id="NF003717">
    <property type="entry name" value="PRK05327.1"/>
    <property type="match status" value="1"/>
</dbReference>
<dbReference type="NCBIfam" id="TIGR01017">
    <property type="entry name" value="rpsD_bact"/>
    <property type="match status" value="1"/>
</dbReference>
<dbReference type="PANTHER" id="PTHR11831">
    <property type="entry name" value="30S 40S RIBOSOMAL PROTEIN"/>
    <property type="match status" value="1"/>
</dbReference>
<dbReference type="PANTHER" id="PTHR11831:SF4">
    <property type="entry name" value="SMALL RIBOSOMAL SUBUNIT PROTEIN US4M"/>
    <property type="match status" value="1"/>
</dbReference>
<dbReference type="Pfam" id="PF00163">
    <property type="entry name" value="Ribosomal_S4"/>
    <property type="match status" value="1"/>
</dbReference>
<dbReference type="Pfam" id="PF01479">
    <property type="entry name" value="S4"/>
    <property type="match status" value="1"/>
</dbReference>
<dbReference type="SMART" id="SM01390">
    <property type="entry name" value="Ribosomal_S4"/>
    <property type="match status" value="1"/>
</dbReference>
<dbReference type="SMART" id="SM00363">
    <property type="entry name" value="S4"/>
    <property type="match status" value="1"/>
</dbReference>
<dbReference type="SUPFAM" id="SSF55174">
    <property type="entry name" value="Alpha-L RNA-binding motif"/>
    <property type="match status" value="1"/>
</dbReference>
<dbReference type="PROSITE" id="PS00632">
    <property type="entry name" value="RIBOSOMAL_S4"/>
    <property type="match status" value="1"/>
</dbReference>
<dbReference type="PROSITE" id="PS50889">
    <property type="entry name" value="S4"/>
    <property type="match status" value="1"/>
</dbReference>
<comment type="function">
    <text evidence="1">One of the primary rRNA binding proteins, it binds directly to 16S rRNA where it nucleates assembly of the body of the 30S subunit.</text>
</comment>
<comment type="function">
    <text evidence="1">With S5 and S12 plays an important role in translational accuracy.</text>
</comment>
<comment type="subunit">
    <text evidence="1">Part of the 30S ribosomal subunit. Contacts protein S5. The interaction surface between S4 and S5 is involved in control of translational fidelity.</text>
</comment>
<comment type="similarity">
    <text evidence="1">Belongs to the universal ribosomal protein uS4 family.</text>
</comment>
<accession>C1CXD5</accession>
<organism>
    <name type="scientific">Deinococcus deserti (strain DSM 17065 / CIP 109153 / LMG 22923 / VCD115)</name>
    <dbReference type="NCBI Taxonomy" id="546414"/>
    <lineage>
        <taxon>Bacteria</taxon>
        <taxon>Thermotogati</taxon>
        <taxon>Deinococcota</taxon>
        <taxon>Deinococci</taxon>
        <taxon>Deinococcales</taxon>
        <taxon>Deinococcaceae</taxon>
        <taxon>Deinococcus</taxon>
    </lineage>
</organism>
<gene>
    <name evidence="1" type="primary">rpsD</name>
    <name type="ordered locus">Deide_18640</name>
</gene>
<feature type="chain" id="PRO_1000214282" description="Small ribosomal subunit protein uS4">
    <location>
        <begin position="1"/>
        <end position="206"/>
    </location>
</feature>
<feature type="domain" description="S4 RNA-binding" evidence="1">
    <location>
        <begin position="96"/>
        <end position="171"/>
    </location>
</feature>
<feature type="region of interest" description="Disordered" evidence="2">
    <location>
        <begin position="29"/>
        <end position="52"/>
    </location>
</feature>
<reference key="1">
    <citation type="journal article" date="2009" name="PLoS Genet.">
        <title>Alliance of proteomics and genomics to unravel the specificities of Sahara bacterium Deinococcus deserti.</title>
        <authorList>
            <person name="de Groot A."/>
            <person name="Dulermo R."/>
            <person name="Ortet P."/>
            <person name="Blanchard L."/>
            <person name="Guerin P."/>
            <person name="Fernandez B."/>
            <person name="Vacherie B."/>
            <person name="Dossat C."/>
            <person name="Jolivet E."/>
            <person name="Siguier P."/>
            <person name="Chandler M."/>
            <person name="Barakat M."/>
            <person name="Dedieu A."/>
            <person name="Barbe V."/>
            <person name="Heulin T."/>
            <person name="Sommer S."/>
            <person name="Achouak W."/>
            <person name="Armengaud J."/>
        </authorList>
    </citation>
    <scope>NUCLEOTIDE SEQUENCE [LARGE SCALE GENOMIC DNA]</scope>
    <source>
        <strain>DSM 17065 / CIP 109153 / LMG 22923 / VCD115</strain>
    </source>
</reference>
<proteinExistence type="inferred from homology"/>